<dbReference type="EMBL" id="CP000143">
    <property type="protein sequence ID" value="ABA79612.1"/>
    <property type="molecule type" value="Genomic_DNA"/>
</dbReference>
<dbReference type="RefSeq" id="WP_002720603.1">
    <property type="nucleotide sequence ID" value="NZ_CP030271.1"/>
</dbReference>
<dbReference type="RefSeq" id="YP_353513.1">
    <property type="nucleotide sequence ID" value="NC_007493.2"/>
</dbReference>
<dbReference type="SMR" id="Q3J0S2"/>
<dbReference type="STRING" id="272943.RSP_0439"/>
<dbReference type="EnsemblBacteria" id="ABA79612">
    <property type="protein sequence ID" value="ABA79612"/>
    <property type="gene ID" value="RSP_0439"/>
</dbReference>
<dbReference type="KEGG" id="rsp:RSP_0439"/>
<dbReference type="PATRIC" id="fig|272943.9.peg.2389"/>
<dbReference type="eggNOG" id="COG0393">
    <property type="taxonomic scope" value="Bacteria"/>
</dbReference>
<dbReference type="OrthoDB" id="9796448at2"/>
<dbReference type="PhylomeDB" id="Q3J0S2"/>
<dbReference type="Proteomes" id="UP000002703">
    <property type="component" value="Chromosome 1"/>
</dbReference>
<dbReference type="Gene3D" id="3.30.110.70">
    <property type="entry name" value="Hypothetical protein apc22750. Chain B"/>
    <property type="match status" value="1"/>
</dbReference>
<dbReference type="HAMAP" id="MF_00338">
    <property type="entry name" value="UPF0145"/>
    <property type="match status" value="1"/>
</dbReference>
<dbReference type="InterPro" id="IPR035439">
    <property type="entry name" value="UPF0145_dom_sf"/>
</dbReference>
<dbReference type="InterPro" id="IPR002765">
    <property type="entry name" value="UPF0145_YbjQ-like"/>
</dbReference>
<dbReference type="PANTHER" id="PTHR34068">
    <property type="entry name" value="UPF0145 PROTEIN YBJQ"/>
    <property type="match status" value="1"/>
</dbReference>
<dbReference type="PANTHER" id="PTHR34068:SF1">
    <property type="entry name" value="UPF0145 PROTEIN YBJQ"/>
    <property type="match status" value="1"/>
</dbReference>
<dbReference type="Pfam" id="PF01906">
    <property type="entry name" value="YbjQ_1"/>
    <property type="match status" value="1"/>
</dbReference>
<dbReference type="SUPFAM" id="SSF117782">
    <property type="entry name" value="YbjQ-like"/>
    <property type="match status" value="1"/>
</dbReference>
<proteinExistence type="inferred from homology"/>
<name>YK44_CERS4</name>
<organism>
    <name type="scientific">Cereibacter sphaeroides (strain ATCC 17023 / DSM 158 / JCM 6121 / CCUG 31486 / LMG 2827 / NBRC 12203 / NCIMB 8253 / ATH 2.4.1.)</name>
    <name type="common">Rhodobacter sphaeroides</name>
    <dbReference type="NCBI Taxonomy" id="272943"/>
    <lineage>
        <taxon>Bacteria</taxon>
        <taxon>Pseudomonadati</taxon>
        <taxon>Pseudomonadota</taxon>
        <taxon>Alphaproteobacteria</taxon>
        <taxon>Rhodobacterales</taxon>
        <taxon>Paracoccaceae</taxon>
        <taxon>Cereibacter</taxon>
    </lineage>
</organism>
<evidence type="ECO:0000255" key="1">
    <source>
        <dbReference type="HAMAP-Rule" id="MF_00338"/>
    </source>
</evidence>
<feature type="chain" id="PRO_0000225840" description="UPF0145 protein RHOS4_20440">
    <location>
        <begin position="1"/>
        <end position="103"/>
    </location>
</feature>
<protein>
    <recommendedName>
        <fullName evidence="1">UPF0145 protein RHOS4_20440</fullName>
    </recommendedName>
</protein>
<sequence>MIVTTTPNIEGYQIATYHGIVTGEAILGANVIRDLFAGITDFIGGRSGAYEKELGRARETALSEMEEAARAKGANAVVGVDLDYEVINNMLMVSASGTAVTIA</sequence>
<comment type="similarity">
    <text evidence="1">Belongs to the UPF0145 family.</text>
</comment>
<gene>
    <name type="ordered locus">RHOS4_20440</name>
    <name type="ORF">RSP_0439</name>
</gene>
<keyword id="KW-1185">Reference proteome</keyword>
<accession>Q3J0S2</accession>
<reference key="1">
    <citation type="submission" date="2005-09" db="EMBL/GenBank/DDBJ databases">
        <title>Complete sequence of chromosome 1 of Rhodobacter sphaeroides 2.4.1.</title>
        <authorList>
            <person name="Copeland A."/>
            <person name="Lucas S."/>
            <person name="Lapidus A."/>
            <person name="Barry K."/>
            <person name="Detter J.C."/>
            <person name="Glavina T."/>
            <person name="Hammon N."/>
            <person name="Israni S."/>
            <person name="Pitluck S."/>
            <person name="Richardson P."/>
            <person name="Mackenzie C."/>
            <person name="Choudhary M."/>
            <person name="Larimer F."/>
            <person name="Hauser L.J."/>
            <person name="Land M."/>
            <person name="Donohue T.J."/>
            <person name="Kaplan S."/>
        </authorList>
    </citation>
    <scope>NUCLEOTIDE SEQUENCE [LARGE SCALE GENOMIC DNA]</scope>
    <source>
        <strain>ATCC 17023 / DSM 158 / JCM 6121 / CCUG 31486 / LMG 2827 / NBRC 12203 / NCIMB 8253 / ATH 2.4.1.</strain>
    </source>
</reference>